<dbReference type="EC" id="1.6.5.9"/>
<dbReference type="EMBL" id="CU329670">
    <property type="protein sequence ID" value="CAB16382.1"/>
    <property type="molecule type" value="Genomic_DNA"/>
</dbReference>
<dbReference type="PIR" id="T11629">
    <property type="entry name" value="T11629"/>
</dbReference>
<dbReference type="SMR" id="O14121"/>
<dbReference type="BioGRID" id="279551">
    <property type="interactions" value="21"/>
</dbReference>
<dbReference type="FunCoup" id="O14121">
    <property type="interactions" value="219"/>
</dbReference>
<dbReference type="STRING" id="284812.O14121"/>
<dbReference type="iPTMnet" id="O14121"/>
<dbReference type="PaxDb" id="4896-SPAC3A11.07.1"/>
<dbReference type="EnsemblFungi" id="SPAC3A11.07.1">
    <property type="protein sequence ID" value="SPAC3A11.07.1:pep"/>
    <property type="gene ID" value="SPAC3A11.07"/>
</dbReference>
<dbReference type="KEGG" id="spo:2543119"/>
<dbReference type="PomBase" id="SPAC3A11.07"/>
<dbReference type="VEuPathDB" id="FungiDB:SPAC3A11.07"/>
<dbReference type="eggNOG" id="KOG2495">
    <property type="taxonomic scope" value="Eukaryota"/>
</dbReference>
<dbReference type="HOGENOM" id="CLU_021377_1_0_1"/>
<dbReference type="InParanoid" id="O14121"/>
<dbReference type="OMA" id="QIPAQKD"/>
<dbReference type="PhylomeDB" id="O14121"/>
<dbReference type="PRO" id="PR:O14121"/>
<dbReference type="Proteomes" id="UP000002485">
    <property type="component" value="Chromosome I"/>
</dbReference>
<dbReference type="GO" id="GO:0031966">
    <property type="term" value="C:mitochondrial membrane"/>
    <property type="evidence" value="ECO:0000266"/>
    <property type="project" value="PomBase"/>
</dbReference>
<dbReference type="GO" id="GO:0005739">
    <property type="term" value="C:mitochondrion"/>
    <property type="evidence" value="ECO:0007005"/>
    <property type="project" value="PomBase"/>
</dbReference>
<dbReference type="GO" id="GO:0050136">
    <property type="term" value="F:NADH:ubiquinone reductase (non-electrogenic) activity"/>
    <property type="evidence" value="ECO:0007669"/>
    <property type="project" value="UniProtKB-EC"/>
</dbReference>
<dbReference type="GO" id="GO:0016491">
    <property type="term" value="F:oxidoreductase activity"/>
    <property type="evidence" value="ECO:0000318"/>
    <property type="project" value="GO_Central"/>
</dbReference>
<dbReference type="GO" id="GO:0006119">
    <property type="term" value="P:oxidative phosphorylation"/>
    <property type="evidence" value="ECO:0000250"/>
    <property type="project" value="PomBase"/>
</dbReference>
<dbReference type="FunFam" id="3.50.50.100:FF:000007">
    <property type="entry name" value="Rotenone-insensitive NADH-ubiquinone oxidoreductase, mitochondrial"/>
    <property type="match status" value="1"/>
</dbReference>
<dbReference type="Gene3D" id="3.50.50.100">
    <property type="match status" value="1"/>
</dbReference>
<dbReference type="InterPro" id="IPR036188">
    <property type="entry name" value="FAD/NAD-bd_sf"/>
</dbReference>
<dbReference type="InterPro" id="IPR023753">
    <property type="entry name" value="FAD/NAD-binding_dom"/>
</dbReference>
<dbReference type="InterPro" id="IPR045024">
    <property type="entry name" value="NDH-2"/>
</dbReference>
<dbReference type="InterPro" id="IPR054585">
    <property type="entry name" value="NDH2-like_C"/>
</dbReference>
<dbReference type="PANTHER" id="PTHR43706:SF47">
    <property type="entry name" value="EXTERNAL NADH-UBIQUINONE OXIDOREDUCTASE 1, MITOCHONDRIAL-RELATED"/>
    <property type="match status" value="1"/>
</dbReference>
<dbReference type="PANTHER" id="PTHR43706">
    <property type="entry name" value="NADH DEHYDROGENASE"/>
    <property type="match status" value="1"/>
</dbReference>
<dbReference type="Pfam" id="PF22366">
    <property type="entry name" value="NDH2_C"/>
    <property type="match status" value="1"/>
</dbReference>
<dbReference type="Pfam" id="PF07992">
    <property type="entry name" value="Pyr_redox_2"/>
    <property type="match status" value="1"/>
</dbReference>
<dbReference type="PRINTS" id="PR00368">
    <property type="entry name" value="FADPNR"/>
</dbReference>
<dbReference type="SUPFAM" id="SSF51905">
    <property type="entry name" value="FAD/NAD(P)-binding domain"/>
    <property type="match status" value="2"/>
</dbReference>
<proteinExistence type="inferred from homology"/>
<evidence type="ECO:0000250" key="1"/>
<evidence type="ECO:0000255" key="2"/>
<evidence type="ECO:0000269" key="3">
    <source>
    </source>
</evidence>
<evidence type="ECO:0000305" key="4"/>
<reference key="1">
    <citation type="journal article" date="2002" name="Nature">
        <title>The genome sequence of Schizosaccharomyces pombe.</title>
        <authorList>
            <person name="Wood V."/>
            <person name="Gwilliam R."/>
            <person name="Rajandream M.A."/>
            <person name="Lyne M.H."/>
            <person name="Lyne R."/>
            <person name="Stewart A."/>
            <person name="Sgouros J.G."/>
            <person name="Peat N."/>
            <person name="Hayles J."/>
            <person name="Baker S.G."/>
            <person name="Basham D."/>
            <person name="Bowman S."/>
            <person name="Brooks K."/>
            <person name="Brown D."/>
            <person name="Brown S."/>
            <person name="Chillingworth T."/>
            <person name="Churcher C.M."/>
            <person name="Collins M."/>
            <person name="Connor R."/>
            <person name="Cronin A."/>
            <person name="Davis P."/>
            <person name="Feltwell T."/>
            <person name="Fraser A."/>
            <person name="Gentles S."/>
            <person name="Goble A."/>
            <person name="Hamlin N."/>
            <person name="Harris D.E."/>
            <person name="Hidalgo J."/>
            <person name="Hodgson G."/>
            <person name="Holroyd S."/>
            <person name="Hornsby T."/>
            <person name="Howarth S."/>
            <person name="Huckle E.J."/>
            <person name="Hunt S."/>
            <person name="Jagels K."/>
            <person name="James K.D."/>
            <person name="Jones L."/>
            <person name="Jones M."/>
            <person name="Leather S."/>
            <person name="McDonald S."/>
            <person name="McLean J."/>
            <person name="Mooney P."/>
            <person name="Moule S."/>
            <person name="Mungall K.L."/>
            <person name="Murphy L.D."/>
            <person name="Niblett D."/>
            <person name="Odell C."/>
            <person name="Oliver K."/>
            <person name="O'Neil S."/>
            <person name="Pearson D."/>
            <person name="Quail M.A."/>
            <person name="Rabbinowitsch E."/>
            <person name="Rutherford K.M."/>
            <person name="Rutter S."/>
            <person name="Saunders D."/>
            <person name="Seeger K."/>
            <person name="Sharp S."/>
            <person name="Skelton J."/>
            <person name="Simmonds M.N."/>
            <person name="Squares R."/>
            <person name="Squares S."/>
            <person name="Stevens K."/>
            <person name="Taylor K."/>
            <person name="Taylor R.G."/>
            <person name="Tivey A."/>
            <person name="Walsh S.V."/>
            <person name="Warren T."/>
            <person name="Whitehead S."/>
            <person name="Woodward J.R."/>
            <person name="Volckaert G."/>
            <person name="Aert R."/>
            <person name="Robben J."/>
            <person name="Grymonprez B."/>
            <person name="Weltjens I."/>
            <person name="Vanstreels E."/>
            <person name="Rieger M."/>
            <person name="Schaefer M."/>
            <person name="Mueller-Auer S."/>
            <person name="Gabel C."/>
            <person name="Fuchs M."/>
            <person name="Duesterhoeft A."/>
            <person name="Fritzc C."/>
            <person name="Holzer E."/>
            <person name="Moestl D."/>
            <person name="Hilbert H."/>
            <person name="Borzym K."/>
            <person name="Langer I."/>
            <person name="Beck A."/>
            <person name="Lehrach H."/>
            <person name="Reinhardt R."/>
            <person name="Pohl T.M."/>
            <person name="Eger P."/>
            <person name="Zimmermann W."/>
            <person name="Wedler H."/>
            <person name="Wambutt R."/>
            <person name="Purnelle B."/>
            <person name="Goffeau A."/>
            <person name="Cadieu E."/>
            <person name="Dreano S."/>
            <person name="Gloux S."/>
            <person name="Lelaure V."/>
            <person name="Mottier S."/>
            <person name="Galibert F."/>
            <person name="Aves S.J."/>
            <person name="Xiang Z."/>
            <person name="Hunt C."/>
            <person name="Moore K."/>
            <person name="Hurst S.M."/>
            <person name="Lucas M."/>
            <person name="Rochet M."/>
            <person name="Gaillardin C."/>
            <person name="Tallada V.A."/>
            <person name="Garzon A."/>
            <person name="Thode G."/>
            <person name="Daga R.R."/>
            <person name="Cruzado L."/>
            <person name="Jimenez J."/>
            <person name="Sanchez M."/>
            <person name="del Rey F."/>
            <person name="Benito J."/>
            <person name="Dominguez A."/>
            <person name="Revuelta J.L."/>
            <person name="Moreno S."/>
            <person name="Armstrong J."/>
            <person name="Forsburg S.L."/>
            <person name="Cerutti L."/>
            <person name="Lowe T."/>
            <person name="McCombie W.R."/>
            <person name="Paulsen I."/>
            <person name="Potashkin J."/>
            <person name="Shpakovski G.V."/>
            <person name="Ussery D."/>
            <person name="Barrell B.G."/>
            <person name="Nurse P."/>
        </authorList>
    </citation>
    <scope>NUCLEOTIDE SEQUENCE [LARGE SCALE GENOMIC DNA]</scope>
    <source>
        <strain>972 / ATCC 24843</strain>
    </source>
</reference>
<reference key="2">
    <citation type="journal article" date="2006" name="Nat. Biotechnol.">
        <title>ORFeome cloning and global analysis of protein localization in the fission yeast Schizosaccharomyces pombe.</title>
        <authorList>
            <person name="Matsuyama A."/>
            <person name="Arai R."/>
            <person name="Yashiroda Y."/>
            <person name="Shirai A."/>
            <person name="Kamata A."/>
            <person name="Sekido S."/>
            <person name="Kobayashi Y."/>
            <person name="Hashimoto A."/>
            <person name="Hamamoto M."/>
            <person name="Hiraoka Y."/>
            <person name="Horinouchi S."/>
            <person name="Yoshida M."/>
        </authorList>
    </citation>
    <scope>SUBCELLULAR LOCATION [LARGE SCALE ANALYSIS]</scope>
</reference>
<protein>
    <recommendedName>
        <fullName>Probable NADH-ubiquinone oxidoreductase C3A11.07, mitochondrial</fullName>
        <ecNumber>1.6.5.9</ecNumber>
    </recommendedName>
</protein>
<comment type="function">
    <text evidence="1">Catalyzes the oxidation of NADH.</text>
</comment>
<comment type="catalytic activity">
    <reaction>
        <text>a quinone + NADH + H(+) = a quinol + NAD(+)</text>
        <dbReference type="Rhea" id="RHEA:46160"/>
        <dbReference type="ChEBI" id="CHEBI:15378"/>
        <dbReference type="ChEBI" id="CHEBI:24646"/>
        <dbReference type="ChEBI" id="CHEBI:57540"/>
        <dbReference type="ChEBI" id="CHEBI:57945"/>
        <dbReference type="ChEBI" id="CHEBI:132124"/>
        <dbReference type="EC" id="1.6.5.9"/>
    </reaction>
</comment>
<comment type="catalytic activity">
    <reaction>
        <text>a ubiquinone + NADH + H(+) = a ubiquinol + NAD(+)</text>
        <dbReference type="Rhea" id="RHEA:23152"/>
        <dbReference type="Rhea" id="RHEA-COMP:9565"/>
        <dbReference type="Rhea" id="RHEA-COMP:9566"/>
        <dbReference type="ChEBI" id="CHEBI:15378"/>
        <dbReference type="ChEBI" id="CHEBI:16389"/>
        <dbReference type="ChEBI" id="CHEBI:17976"/>
        <dbReference type="ChEBI" id="CHEBI:57540"/>
        <dbReference type="ChEBI" id="CHEBI:57945"/>
    </reaction>
</comment>
<comment type="subcellular location">
    <subcellularLocation>
        <location evidence="3">Mitochondrion</location>
    </subcellularLocation>
</comment>
<comment type="similarity">
    <text evidence="4">Belongs to the NADH dehydrogenase family.</text>
</comment>
<sequence length="551" mass="61675">MLFSRSILRGMPKAGIPKSPLALSASRNLRLANSVRFASDAASSPKSTTSKWKILKRTTLGLFATAVVLYGANVYRFRHPDPHQPLPDPSKKTLVVLGAGWGATSILRTIDTSLFNVIVVSPRNYFLFTSLLPSTATGSVHTRSIVQPIRYMLRHKSCYVKFYEAECTDVDADKKVIHIKKTTTDGVDLEQEIKYDYLVCSHGAETQTFNIPGIAEYGCFLKEIWDAQKIRARILHCLEQAQFKDLPAETRRRYVHTVVVGGGPTGMEFAGEMADFIEDDLKSWYPELADDFAVTLVEALPSVLPMFSAKLRDYTQSLFDSSHIKIRTNTALKKVTAENIHVEVKNPDGSKQEEVIPYGLLVWAGGNRARPLTKKLMEGSEEQNNRRGLVVDEYLKLKGYKDIFALGDCTHTAYAPTAQVASQQGAYLGQLFNKLGSLNFEKPSEDRHIALGDEMDSSTLISLANEKHASTKVFLPFKYSHQGSLAYVGHEKAIADIEVPWFGKQLHASGALAFYFWRSVYLSELYSLRNRTNVTLDWIRVKLFGRDISSL</sequence>
<keyword id="KW-0274">FAD</keyword>
<keyword id="KW-0285">Flavoprotein</keyword>
<keyword id="KW-0496">Mitochondrion</keyword>
<keyword id="KW-0520">NAD</keyword>
<keyword id="KW-0560">Oxidoreductase</keyword>
<keyword id="KW-1185">Reference proteome</keyword>
<keyword id="KW-0809">Transit peptide</keyword>
<keyword id="KW-0830">Ubiquinone</keyword>
<name>NDH1_SCHPO</name>
<organism>
    <name type="scientific">Schizosaccharomyces pombe (strain 972 / ATCC 24843)</name>
    <name type="common">Fission yeast</name>
    <dbReference type="NCBI Taxonomy" id="284812"/>
    <lineage>
        <taxon>Eukaryota</taxon>
        <taxon>Fungi</taxon>
        <taxon>Dikarya</taxon>
        <taxon>Ascomycota</taxon>
        <taxon>Taphrinomycotina</taxon>
        <taxon>Schizosaccharomycetes</taxon>
        <taxon>Schizosaccharomycetales</taxon>
        <taxon>Schizosaccharomycetaceae</taxon>
        <taxon>Schizosaccharomyces</taxon>
    </lineage>
</organism>
<accession>O14121</accession>
<gene>
    <name type="ORF">SPAC3A11.07</name>
</gene>
<feature type="transit peptide" description="Mitochondrion" evidence="2">
    <location>
        <begin position="1"/>
        <end position="37"/>
    </location>
</feature>
<feature type="chain" id="PRO_0000337257" description="Probable NADH-ubiquinone oxidoreductase C3A11.07, mitochondrial">
    <location>
        <begin position="38"/>
        <end position="551"/>
    </location>
</feature>
<feature type="binding site" evidence="1">
    <location>
        <begin position="93"/>
        <end position="123"/>
    </location>
    <ligand>
        <name>FAD</name>
        <dbReference type="ChEBI" id="CHEBI:57692"/>
    </ligand>
</feature>
<feature type="binding site" evidence="1">
    <location>
        <begin position="255"/>
        <end position="291"/>
    </location>
    <ligand>
        <name>NAD(+)</name>
        <dbReference type="ChEBI" id="CHEBI:57540"/>
    </ligand>
</feature>